<gene>
    <name type="ordered locus">At4g16620</name>
    <name type="ORF">dl4335c</name>
    <name type="ORF">FCAALL.421</name>
</gene>
<feature type="chain" id="PRO_0000421341" description="WAT1-related protein At4g16620">
    <location>
        <begin position="1"/>
        <end position="359"/>
    </location>
</feature>
<feature type="transmembrane region" description="Helical" evidence="2">
    <location>
        <begin position="5"/>
        <end position="25"/>
    </location>
</feature>
<feature type="transmembrane region" description="Helical" evidence="2">
    <location>
        <begin position="41"/>
        <end position="61"/>
    </location>
</feature>
<feature type="transmembrane region" description="Helical" evidence="2">
    <location>
        <begin position="77"/>
        <end position="97"/>
    </location>
</feature>
<feature type="transmembrane region" description="Helical" evidence="2">
    <location>
        <begin position="105"/>
        <end position="125"/>
    </location>
</feature>
<feature type="transmembrane region" description="Helical" evidence="2">
    <location>
        <begin position="143"/>
        <end position="163"/>
    </location>
</feature>
<feature type="transmembrane region" description="Helical" evidence="2">
    <location>
        <begin position="183"/>
        <end position="203"/>
    </location>
</feature>
<feature type="transmembrane region" description="Helical" evidence="2">
    <location>
        <begin position="206"/>
        <end position="226"/>
    </location>
</feature>
<feature type="transmembrane region" description="Helical" evidence="2">
    <location>
        <begin position="246"/>
        <end position="266"/>
    </location>
</feature>
<feature type="transmembrane region" description="Helical" evidence="2">
    <location>
        <begin position="279"/>
        <end position="299"/>
    </location>
</feature>
<feature type="transmembrane region" description="Helical" evidence="2">
    <location>
        <begin position="305"/>
        <end position="325"/>
    </location>
</feature>
<feature type="domain" description="EamA 1">
    <location>
        <begin position="30"/>
        <end position="154"/>
    </location>
</feature>
<feature type="domain" description="EamA 2">
    <location>
        <begin position="206"/>
        <end position="324"/>
    </location>
</feature>
<feature type="sequence conflict" description="In Ref. 4; BX829136." evidence="3" ref="4">
    <original>F</original>
    <variation>Y</variation>
    <location>
        <position position="90"/>
    </location>
</feature>
<feature type="sequence conflict" description="In Ref. 4; BX829136." evidence="3" ref="4">
    <original>A</original>
    <variation>T</variation>
    <location>
        <position position="103"/>
    </location>
</feature>
<feature type="sequence conflict" description="In Ref. 4; BX829136." evidence="3" ref="4">
    <original>L</original>
    <variation>F</variation>
    <location>
        <position position="112"/>
    </location>
</feature>
<feature type="sequence conflict" description="In Ref. 4; BX829136." evidence="3" ref="4">
    <original>DE</original>
    <variation>YV</variation>
    <location>
        <begin position="174"/>
        <end position="175"/>
    </location>
</feature>
<feature type="sequence conflict" description="In Ref. 4; BX829136." evidence="3" ref="4">
    <original>S</original>
    <variation>F</variation>
    <location>
        <position position="198"/>
    </location>
</feature>
<feature type="sequence conflict" description="In Ref. 4; BX829136." evidence="3" ref="4">
    <original>V</original>
    <variation>L</variation>
    <location>
        <position position="229"/>
    </location>
</feature>
<feature type="sequence conflict" description="In Ref. 4; BX829136." evidence="3" ref="4">
    <original>A</original>
    <variation>V</variation>
    <location>
        <position position="234"/>
    </location>
</feature>
<feature type="sequence conflict" description="In Ref. 4; BX829136." evidence="3" ref="4">
    <original>S</original>
    <variation>I</variation>
    <location>
        <position position="268"/>
    </location>
</feature>
<feature type="sequence conflict" description="In Ref. 4; BX829136." evidence="3" ref="4">
    <original>SLFSPIATVVCVVVSA</original>
    <variation>CVLRRMAILVCFVVSV</variation>
    <location>
        <begin position="283"/>
        <end position="298"/>
    </location>
</feature>
<feature type="sequence conflict" description="In Ref. 4; BX829136." evidence="3" ref="4">
    <original>G</original>
    <variation>V</variation>
    <location>
        <position position="312"/>
    </location>
</feature>
<feature type="sequence conflict" description="In Ref. 4; BX829136." evidence="3" ref="4">
    <original>R</original>
    <variation>S</variation>
    <location>
        <position position="348"/>
    </location>
</feature>
<feature type="sequence conflict" description="In Ref. 4; BX829136." evidence="3" ref="4">
    <original>L</original>
    <variation>V</variation>
    <location>
        <position position="357"/>
    </location>
</feature>
<proteinExistence type="evidence at transcript level"/>
<evidence type="ECO:0000250" key="1"/>
<evidence type="ECO:0000255" key="2"/>
<evidence type="ECO:0000305" key="3"/>
<comment type="subcellular location">
    <subcellularLocation>
        <location evidence="1">Membrane</location>
        <topology evidence="3">Multi-pass membrane protein</topology>
    </subcellularLocation>
</comment>
<comment type="similarity">
    <text evidence="3">Belongs to the drug/metabolite transporter (DMT) superfamily. Plant drug/metabolite exporter (P-DME) (TC 2.A.7.4) family.</text>
</comment>
<comment type="sequence caution" evidence="3">
    <conflict type="erroneous termination">
        <sequence resource="EMBL" id="BX829136"/>
    </conflict>
    <text>Truncated C-terminus.</text>
</comment>
<comment type="sequence caution" evidence="3">
    <conflict type="erroneous gene model prediction">
        <sequence resource="EMBL-CDS" id="CAB10437"/>
    </conflict>
</comment>
<comment type="sequence caution" evidence="3">
    <conflict type="erroneous gene model prediction">
        <sequence resource="EMBL-CDS" id="CAB78704"/>
    </conflict>
</comment>
<dbReference type="EMBL" id="Z97341">
    <property type="protein sequence ID" value="CAB10437.1"/>
    <property type="status" value="ALT_SEQ"/>
    <property type="molecule type" value="Genomic_DNA"/>
</dbReference>
<dbReference type="EMBL" id="AL161544">
    <property type="protein sequence ID" value="CAB78704.1"/>
    <property type="status" value="ALT_SEQ"/>
    <property type="molecule type" value="Genomic_DNA"/>
</dbReference>
<dbReference type="EMBL" id="CP002687">
    <property type="protein sequence ID" value="AEE83777.1"/>
    <property type="molecule type" value="Genomic_DNA"/>
</dbReference>
<dbReference type="EMBL" id="BX829136">
    <property type="status" value="NOT_ANNOTATED_CDS"/>
    <property type="molecule type" value="mRNA"/>
</dbReference>
<dbReference type="PIR" id="C71433">
    <property type="entry name" value="C71433"/>
</dbReference>
<dbReference type="RefSeq" id="NP_193395.3">
    <property type="nucleotide sequence ID" value="NM_117763.5"/>
</dbReference>
<dbReference type="SMR" id="F4JMI7"/>
<dbReference type="BioGRID" id="12656">
    <property type="interactions" value="36"/>
</dbReference>
<dbReference type="IntAct" id="F4JMI7">
    <property type="interactions" value="36"/>
</dbReference>
<dbReference type="STRING" id="3702.F4JMI7"/>
<dbReference type="PaxDb" id="3702-AT4G16620.1"/>
<dbReference type="EnsemblPlants" id="AT4G16620.1">
    <property type="protein sequence ID" value="AT4G16620.1"/>
    <property type="gene ID" value="AT4G16620"/>
</dbReference>
<dbReference type="GeneID" id="827363"/>
<dbReference type="Gramene" id="AT4G16620.1">
    <property type="protein sequence ID" value="AT4G16620.1"/>
    <property type="gene ID" value="AT4G16620"/>
</dbReference>
<dbReference type="KEGG" id="ath:AT4G16620"/>
<dbReference type="Araport" id="AT4G16620"/>
<dbReference type="TAIR" id="AT4G16620">
    <property type="gene designation" value="UMAMIT8"/>
</dbReference>
<dbReference type="eggNOG" id="ENOG502QVME">
    <property type="taxonomic scope" value="Eukaryota"/>
</dbReference>
<dbReference type="HOGENOM" id="CLU_025359_1_2_1"/>
<dbReference type="InParanoid" id="F4JMI7"/>
<dbReference type="OMA" id="FERFDWK"/>
<dbReference type="OrthoDB" id="642067at2759"/>
<dbReference type="PRO" id="PR:F4JMI7"/>
<dbReference type="Proteomes" id="UP000006548">
    <property type="component" value="Chromosome 4"/>
</dbReference>
<dbReference type="ExpressionAtlas" id="F4JMI7">
    <property type="expression patterns" value="baseline and differential"/>
</dbReference>
<dbReference type="GO" id="GO:0016020">
    <property type="term" value="C:membrane"/>
    <property type="evidence" value="ECO:0007669"/>
    <property type="project" value="UniProtKB-SubCell"/>
</dbReference>
<dbReference type="GO" id="GO:0022857">
    <property type="term" value="F:transmembrane transporter activity"/>
    <property type="evidence" value="ECO:0007669"/>
    <property type="project" value="InterPro"/>
</dbReference>
<dbReference type="InterPro" id="IPR000620">
    <property type="entry name" value="EamA_dom"/>
</dbReference>
<dbReference type="InterPro" id="IPR030184">
    <property type="entry name" value="WAT1-related"/>
</dbReference>
<dbReference type="PANTHER" id="PTHR31218">
    <property type="entry name" value="WAT1-RELATED PROTEIN"/>
    <property type="match status" value="1"/>
</dbReference>
<dbReference type="Pfam" id="PF00892">
    <property type="entry name" value="EamA"/>
    <property type="match status" value="1"/>
</dbReference>
<dbReference type="SUPFAM" id="SSF103481">
    <property type="entry name" value="Multidrug resistance efflux transporter EmrE"/>
    <property type="match status" value="2"/>
</dbReference>
<accession>F4JMI7</accession>
<accession>O23505</accession>
<name>WTR34_ARATH</name>
<keyword id="KW-0472">Membrane</keyword>
<keyword id="KW-1185">Reference proteome</keyword>
<keyword id="KW-0677">Repeat</keyword>
<keyword id="KW-0812">Transmembrane</keyword>
<keyword id="KW-1133">Transmembrane helix</keyword>
<protein>
    <recommendedName>
        <fullName>WAT1-related protein At4g16620</fullName>
    </recommendedName>
</protein>
<sequence length="359" mass="38311">MMKRETLIEAGIIGGLAGAQVIYAGNSELLSQLLSLGIDPLLIVILCTFASVLLITPLAFLLERKLWPRSLSFKLKIKLVLVALAGVTLFQGLFLEGMKHTSASMATAMPNLCPAFIFVIAWAAGMEKVKLSCMYSRVKMGGTVLCVMGALIMSLMHSTTATLSSVKTIPIVPDEVVVDKDKILGCLYLLLAICGLSSSIVLQASILAEFPAPISMFSMVSLMGGITTVALQYALKGSMEMGSASVIGLGHLVGYAILGGLVSGGGLSFNAWVIKRKGPVIVSLFSPIATVVCVVVSAFTMEESFNLGSFAGMALMFGGLYFVLWAKGKEDCEEIDEMKQDDEESLLRTEFDLQKPLLL</sequence>
<reference key="1">
    <citation type="journal article" date="1998" name="Nature">
        <title>Analysis of 1.9 Mb of contiguous sequence from chromosome 4 of Arabidopsis thaliana.</title>
        <authorList>
            <person name="Bevan M."/>
            <person name="Bancroft I."/>
            <person name="Bent E."/>
            <person name="Love K."/>
            <person name="Goodman H.M."/>
            <person name="Dean C."/>
            <person name="Bergkamp R."/>
            <person name="Dirkse W."/>
            <person name="van Staveren M."/>
            <person name="Stiekema W."/>
            <person name="Drost L."/>
            <person name="Ridley P."/>
            <person name="Hudson S.-A."/>
            <person name="Patel K."/>
            <person name="Murphy G."/>
            <person name="Piffanelli P."/>
            <person name="Wedler H."/>
            <person name="Wedler E."/>
            <person name="Wambutt R."/>
            <person name="Weitzenegger T."/>
            <person name="Pohl T."/>
            <person name="Terryn N."/>
            <person name="Gielen J."/>
            <person name="Villarroel R."/>
            <person name="De Clercq R."/>
            <person name="van Montagu M."/>
            <person name="Lecharny A."/>
            <person name="Aubourg S."/>
            <person name="Gy I."/>
            <person name="Kreis M."/>
            <person name="Lao N."/>
            <person name="Kavanagh T."/>
            <person name="Hempel S."/>
            <person name="Kotter P."/>
            <person name="Entian K.-D."/>
            <person name="Rieger M."/>
            <person name="Schaefer M."/>
            <person name="Funk B."/>
            <person name="Mueller-Auer S."/>
            <person name="Silvey M."/>
            <person name="James R."/>
            <person name="Monfort A."/>
            <person name="Pons A."/>
            <person name="Puigdomenech P."/>
            <person name="Douka A."/>
            <person name="Voukelatou E."/>
            <person name="Milioni D."/>
            <person name="Hatzopoulos P."/>
            <person name="Piravandi E."/>
            <person name="Obermaier B."/>
            <person name="Hilbert H."/>
            <person name="Duesterhoeft A."/>
            <person name="Moores T."/>
            <person name="Jones J.D.G."/>
            <person name="Eneva T."/>
            <person name="Palme K."/>
            <person name="Benes V."/>
            <person name="Rechmann S."/>
            <person name="Ansorge W."/>
            <person name="Cooke R."/>
            <person name="Berger C."/>
            <person name="Delseny M."/>
            <person name="Voet M."/>
            <person name="Volckaert G."/>
            <person name="Mewes H.-W."/>
            <person name="Klosterman S."/>
            <person name="Schueller C."/>
            <person name="Chalwatzis N."/>
        </authorList>
    </citation>
    <scope>NUCLEOTIDE SEQUENCE [LARGE SCALE GENOMIC DNA]</scope>
    <source>
        <strain>cv. Columbia</strain>
    </source>
</reference>
<reference key="2">
    <citation type="journal article" date="1999" name="Nature">
        <title>Sequence and analysis of chromosome 4 of the plant Arabidopsis thaliana.</title>
        <authorList>
            <person name="Mayer K.F.X."/>
            <person name="Schueller C."/>
            <person name="Wambutt R."/>
            <person name="Murphy G."/>
            <person name="Volckaert G."/>
            <person name="Pohl T."/>
            <person name="Duesterhoeft A."/>
            <person name="Stiekema W."/>
            <person name="Entian K.-D."/>
            <person name="Terryn N."/>
            <person name="Harris B."/>
            <person name="Ansorge W."/>
            <person name="Brandt P."/>
            <person name="Grivell L.A."/>
            <person name="Rieger M."/>
            <person name="Weichselgartner M."/>
            <person name="de Simone V."/>
            <person name="Obermaier B."/>
            <person name="Mache R."/>
            <person name="Mueller M."/>
            <person name="Kreis M."/>
            <person name="Delseny M."/>
            <person name="Puigdomenech P."/>
            <person name="Watson M."/>
            <person name="Schmidtheini T."/>
            <person name="Reichert B."/>
            <person name="Portetelle D."/>
            <person name="Perez-Alonso M."/>
            <person name="Boutry M."/>
            <person name="Bancroft I."/>
            <person name="Vos P."/>
            <person name="Hoheisel J."/>
            <person name="Zimmermann W."/>
            <person name="Wedler H."/>
            <person name="Ridley P."/>
            <person name="Langham S.-A."/>
            <person name="McCullagh B."/>
            <person name="Bilham L."/>
            <person name="Robben J."/>
            <person name="van der Schueren J."/>
            <person name="Grymonprez B."/>
            <person name="Chuang Y.-J."/>
            <person name="Vandenbussche F."/>
            <person name="Braeken M."/>
            <person name="Weltjens I."/>
            <person name="Voet M."/>
            <person name="Bastiaens I."/>
            <person name="Aert R."/>
            <person name="Defoor E."/>
            <person name="Weitzenegger T."/>
            <person name="Bothe G."/>
            <person name="Ramsperger U."/>
            <person name="Hilbert H."/>
            <person name="Braun M."/>
            <person name="Holzer E."/>
            <person name="Brandt A."/>
            <person name="Peters S."/>
            <person name="van Staveren M."/>
            <person name="Dirkse W."/>
            <person name="Mooijman P."/>
            <person name="Klein Lankhorst R."/>
            <person name="Rose M."/>
            <person name="Hauf J."/>
            <person name="Koetter P."/>
            <person name="Berneiser S."/>
            <person name="Hempel S."/>
            <person name="Feldpausch M."/>
            <person name="Lamberth S."/>
            <person name="Van den Daele H."/>
            <person name="De Keyser A."/>
            <person name="Buysshaert C."/>
            <person name="Gielen J."/>
            <person name="Villarroel R."/>
            <person name="De Clercq R."/>
            <person name="van Montagu M."/>
            <person name="Rogers J."/>
            <person name="Cronin A."/>
            <person name="Quail M.A."/>
            <person name="Bray-Allen S."/>
            <person name="Clark L."/>
            <person name="Doggett J."/>
            <person name="Hall S."/>
            <person name="Kay M."/>
            <person name="Lennard N."/>
            <person name="McLay K."/>
            <person name="Mayes R."/>
            <person name="Pettett A."/>
            <person name="Rajandream M.A."/>
            <person name="Lyne M."/>
            <person name="Benes V."/>
            <person name="Rechmann S."/>
            <person name="Borkova D."/>
            <person name="Bloecker H."/>
            <person name="Scharfe M."/>
            <person name="Grimm M."/>
            <person name="Loehnert T.-H."/>
            <person name="Dose S."/>
            <person name="de Haan M."/>
            <person name="Maarse A.C."/>
            <person name="Schaefer M."/>
            <person name="Mueller-Auer S."/>
            <person name="Gabel C."/>
            <person name="Fuchs M."/>
            <person name="Fartmann B."/>
            <person name="Granderath K."/>
            <person name="Dauner D."/>
            <person name="Herzl A."/>
            <person name="Neumann S."/>
            <person name="Argiriou A."/>
            <person name="Vitale D."/>
            <person name="Liguori R."/>
            <person name="Piravandi E."/>
            <person name="Massenet O."/>
            <person name="Quigley F."/>
            <person name="Clabauld G."/>
            <person name="Muendlein A."/>
            <person name="Felber R."/>
            <person name="Schnabl S."/>
            <person name="Hiller R."/>
            <person name="Schmidt W."/>
            <person name="Lecharny A."/>
            <person name="Aubourg S."/>
            <person name="Chefdor F."/>
            <person name="Cooke R."/>
            <person name="Berger C."/>
            <person name="Monfort A."/>
            <person name="Casacuberta E."/>
            <person name="Gibbons T."/>
            <person name="Weber N."/>
            <person name="Vandenbol M."/>
            <person name="Bargues M."/>
            <person name="Terol J."/>
            <person name="Torres A."/>
            <person name="Perez-Perez A."/>
            <person name="Purnelle B."/>
            <person name="Bent E."/>
            <person name="Johnson S."/>
            <person name="Tacon D."/>
            <person name="Jesse T."/>
            <person name="Heijnen L."/>
            <person name="Schwarz S."/>
            <person name="Scholler P."/>
            <person name="Heber S."/>
            <person name="Francs P."/>
            <person name="Bielke C."/>
            <person name="Frishman D."/>
            <person name="Haase D."/>
            <person name="Lemcke K."/>
            <person name="Mewes H.-W."/>
            <person name="Stocker S."/>
            <person name="Zaccaria P."/>
            <person name="Bevan M."/>
            <person name="Wilson R.K."/>
            <person name="de la Bastide M."/>
            <person name="Habermann K."/>
            <person name="Parnell L."/>
            <person name="Dedhia N."/>
            <person name="Gnoj L."/>
            <person name="Schutz K."/>
            <person name="Huang E."/>
            <person name="Spiegel L."/>
            <person name="Sekhon M."/>
            <person name="Murray J."/>
            <person name="Sheet P."/>
            <person name="Cordes M."/>
            <person name="Abu-Threideh J."/>
            <person name="Stoneking T."/>
            <person name="Kalicki J."/>
            <person name="Graves T."/>
            <person name="Harmon G."/>
            <person name="Edwards J."/>
            <person name="Latreille P."/>
            <person name="Courtney L."/>
            <person name="Cloud J."/>
            <person name="Abbott A."/>
            <person name="Scott K."/>
            <person name="Johnson D."/>
            <person name="Minx P."/>
            <person name="Bentley D."/>
            <person name="Fulton B."/>
            <person name="Miller N."/>
            <person name="Greco T."/>
            <person name="Kemp K."/>
            <person name="Kramer J."/>
            <person name="Fulton L."/>
            <person name="Mardis E."/>
            <person name="Dante M."/>
            <person name="Pepin K."/>
            <person name="Hillier L.W."/>
            <person name="Nelson J."/>
            <person name="Spieth J."/>
            <person name="Ryan E."/>
            <person name="Andrews S."/>
            <person name="Geisel C."/>
            <person name="Layman D."/>
            <person name="Du H."/>
            <person name="Ali J."/>
            <person name="Berghoff A."/>
            <person name="Jones K."/>
            <person name="Drone K."/>
            <person name="Cotton M."/>
            <person name="Joshu C."/>
            <person name="Antonoiu B."/>
            <person name="Zidanic M."/>
            <person name="Strong C."/>
            <person name="Sun H."/>
            <person name="Lamar B."/>
            <person name="Yordan C."/>
            <person name="Ma P."/>
            <person name="Zhong J."/>
            <person name="Preston R."/>
            <person name="Vil D."/>
            <person name="Shekher M."/>
            <person name="Matero A."/>
            <person name="Shah R."/>
            <person name="Swaby I.K."/>
            <person name="O'Shaughnessy A."/>
            <person name="Rodriguez M."/>
            <person name="Hoffman J."/>
            <person name="Till S."/>
            <person name="Granat S."/>
            <person name="Shohdy N."/>
            <person name="Hasegawa A."/>
            <person name="Hameed A."/>
            <person name="Lodhi M."/>
            <person name="Johnson A."/>
            <person name="Chen E."/>
            <person name="Marra M.A."/>
            <person name="Martienssen R."/>
            <person name="McCombie W.R."/>
        </authorList>
    </citation>
    <scope>NUCLEOTIDE SEQUENCE [LARGE SCALE GENOMIC DNA]</scope>
    <source>
        <strain>cv. Columbia</strain>
    </source>
</reference>
<reference key="3">
    <citation type="journal article" date="2017" name="Plant J.">
        <title>Araport11: a complete reannotation of the Arabidopsis thaliana reference genome.</title>
        <authorList>
            <person name="Cheng C.Y."/>
            <person name="Krishnakumar V."/>
            <person name="Chan A.P."/>
            <person name="Thibaud-Nissen F."/>
            <person name="Schobel S."/>
            <person name="Town C.D."/>
        </authorList>
    </citation>
    <scope>GENOME REANNOTATION</scope>
    <source>
        <strain>cv. Columbia</strain>
    </source>
</reference>
<reference key="4">
    <citation type="journal article" date="2004" name="Genome Res.">
        <title>Whole genome sequence comparisons and 'full-length' cDNA sequences: a combined approach to evaluate and improve Arabidopsis genome annotation.</title>
        <authorList>
            <person name="Castelli V."/>
            <person name="Aury J.-M."/>
            <person name="Jaillon O."/>
            <person name="Wincker P."/>
            <person name="Clepet C."/>
            <person name="Menard M."/>
            <person name="Cruaud C."/>
            <person name="Quetier F."/>
            <person name="Scarpelli C."/>
            <person name="Schaechter V."/>
            <person name="Temple G."/>
            <person name="Caboche M."/>
            <person name="Weissenbach J."/>
            <person name="Salanoubat M."/>
        </authorList>
    </citation>
    <scope>NUCLEOTIDE SEQUENCE [LARGE SCALE MRNA]</scope>
    <source>
        <strain>cv. Columbia</strain>
    </source>
</reference>
<organism>
    <name type="scientific">Arabidopsis thaliana</name>
    <name type="common">Mouse-ear cress</name>
    <dbReference type="NCBI Taxonomy" id="3702"/>
    <lineage>
        <taxon>Eukaryota</taxon>
        <taxon>Viridiplantae</taxon>
        <taxon>Streptophyta</taxon>
        <taxon>Embryophyta</taxon>
        <taxon>Tracheophyta</taxon>
        <taxon>Spermatophyta</taxon>
        <taxon>Magnoliopsida</taxon>
        <taxon>eudicotyledons</taxon>
        <taxon>Gunneridae</taxon>
        <taxon>Pentapetalae</taxon>
        <taxon>rosids</taxon>
        <taxon>malvids</taxon>
        <taxon>Brassicales</taxon>
        <taxon>Brassicaceae</taxon>
        <taxon>Camelineae</taxon>
        <taxon>Arabidopsis</taxon>
    </lineage>
</organism>